<organism evidence="12">
    <name type="scientific">Mus musculus</name>
    <name type="common">Mouse</name>
    <dbReference type="NCBI Taxonomy" id="10090"/>
    <lineage>
        <taxon>Eukaryota</taxon>
        <taxon>Metazoa</taxon>
        <taxon>Chordata</taxon>
        <taxon>Craniata</taxon>
        <taxon>Vertebrata</taxon>
        <taxon>Euteleostomi</taxon>
        <taxon>Mammalia</taxon>
        <taxon>Eutheria</taxon>
        <taxon>Euarchontoglires</taxon>
        <taxon>Glires</taxon>
        <taxon>Rodentia</taxon>
        <taxon>Myomorpha</taxon>
        <taxon>Muroidea</taxon>
        <taxon>Muridae</taxon>
        <taxon>Murinae</taxon>
        <taxon>Mus</taxon>
        <taxon>Mus</taxon>
    </lineage>
</organism>
<proteinExistence type="evidence at transcript level"/>
<reference evidence="12" key="1">
    <citation type="journal article" date="2009" name="PLoS Biol.">
        <title>Lineage-specific biology revealed by a finished genome assembly of the mouse.</title>
        <authorList>
            <person name="Church D.M."/>
            <person name="Goodstadt L."/>
            <person name="Hillier L.W."/>
            <person name="Zody M.C."/>
            <person name="Goldstein S."/>
            <person name="She X."/>
            <person name="Bult C.J."/>
            <person name="Agarwala R."/>
            <person name="Cherry J.L."/>
            <person name="DiCuccio M."/>
            <person name="Hlavina W."/>
            <person name="Kapustin Y."/>
            <person name="Meric P."/>
            <person name="Maglott D."/>
            <person name="Birtle Z."/>
            <person name="Marques A.C."/>
            <person name="Graves T."/>
            <person name="Zhou S."/>
            <person name="Teague B."/>
            <person name="Potamousis K."/>
            <person name="Churas C."/>
            <person name="Place M."/>
            <person name="Herschleb J."/>
            <person name="Runnheim R."/>
            <person name="Forrest D."/>
            <person name="Amos-Landgraf J."/>
            <person name="Schwartz D.C."/>
            <person name="Cheng Z."/>
            <person name="Lindblad-Toh K."/>
            <person name="Eichler E.E."/>
            <person name="Ponting C.P."/>
        </authorList>
    </citation>
    <scope>NUCLEOTIDE SEQUENCE [LARGE SCALE GENOMIC DNA]</scope>
    <source>
        <strain>C57BL/6J</strain>
    </source>
</reference>
<reference evidence="7" key="2">
    <citation type="journal article" date="2005" name="Science">
        <title>The transcriptional landscape of the mammalian genome.</title>
        <authorList>
            <person name="Carninci P."/>
            <person name="Kasukawa T."/>
            <person name="Katayama S."/>
            <person name="Gough J."/>
            <person name="Frith M.C."/>
            <person name="Maeda N."/>
            <person name="Oyama R."/>
            <person name="Ravasi T."/>
            <person name="Lenhard B."/>
            <person name="Wells C."/>
            <person name="Kodzius R."/>
            <person name="Shimokawa K."/>
            <person name="Bajic V.B."/>
            <person name="Brenner S.E."/>
            <person name="Batalov S."/>
            <person name="Forrest A.R."/>
            <person name="Zavolan M."/>
            <person name="Davis M.J."/>
            <person name="Wilming L.G."/>
            <person name="Aidinis V."/>
            <person name="Allen J.E."/>
            <person name="Ambesi-Impiombato A."/>
            <person name="Apweiler R."/>
            <person name="Aturaliya R.N."/>
            <person name="Bailey T.L."/>
            <person name="Bansal M."/>
            <person name="Baxter L."/>
            <person name="Beisel K.W."/>
            <person name="Bersano T."/>
            <person name="Bono H."/>
            <person name="Chalk A.M."/>
            <person name="Chiu K.P."/>
            <person name="Choudhary V."/>
            <person name="Christoffels A."/>
            <person name="Clutterbuck D.R."/>
            <person name="Crowe M.L."/>
            <person name="Dalla E."/>
            <person name="Dalrymple B.P."/>
            <person name="de Bono B."/>
            <person name="Della Gatta G."/>
            <person name="di Bernardo D."/>
            <person name="Down T."/>
            <person name="Engstrom P."/>
            <person name="Fagiolini M."/>
            <person name="Faulkner G."/>
            <person name="Fletcher C.F."/>
            <person name="Fukushima T."/>
            <person name="Furuno M."/>
            <person name="Futaki S."/>
            <person name="Gariboldi M."/>
            <person name="Georgii-Hemming P."/>
            <person name="Gingeras T.R."/>
            <person name="Gojobori T."/>
            <person name="Green R.E."/>
            <person name="Gustincich S."/>
            <person name="Harbers M."/>
            <person name="Hayashi Y."/>
            <person name="Hensch T.K."/>
            <person name="Hirokawa N."/>
            <person name="Hill D."/>
            <person name="Huminiecki L."/>
            <person name="Iacono M."/>
            <person name="Ikeo K."/>
            <person name="Iwama A."/>
            <person name="Ishikawa T."/>
            <person name="Jakt M."/>
            <person name="Kanapin A."/>
            <person name="Katoh M."/>
            <person name="Kawasawa Y."/>
            <person name="Kelso J."/>
            <person name="Kitamura H."/>
            <person name="Kitano H."/>
            <person name="Kollias G."/>
            <person name="Krishnan S.P."/>
            <person name="Kruger A."/>
            <person name="Kummerfeld S.K."/>
            <person name="Kurochkin I.V."/>
            <person name="Lareau L.F."/>
            <person name="Lazarevic D."/>
            <person name="Lipovich L."/>
            <person name="Liu J."/>
            <person name="Liuni S."/>
            <person name="McWilliam S."/>
            <person name="Madan Babu M."/>
            <person name="Madera M."/>
            <person name="Marchionni L."/>
            <person name="Matsuda H."/>
            <person name="Matsuzawa S."/>
            <person name="Miki H."/>
            <person name="Mignone F."/>
            <person name="Miyake S."/>
            <person name="Morris K."/>
            <person name="Mottagui-Tabar S."/>
            <person name="Mulder N."/>
            <person name="Nakano N."/>
            <person name="Nakauchi H."/>
            <person name="Ng P."/>
            <person name="Nilsson R."/>
            <person name="Nishiguchi S."/>
            <person name="Nishikawa S."/>
            <person name="Nori F."/>
            <person name="Ohara O."/>
            <person name="Okazaki Y."/>
            <person name="Orlando V."/>
            <person name="Pang K.C."/>
            <person name="Pavan W.J."/>
            <person name="Pavesi G."/>
            <person name="Pesole G."/>
            <person name="Petrovsky N."/>
            <person name="Piazza S."/>
            <person name="Reed J."/>
            <person name="Reid J.F."/>
            <person name="Ring B.Z."/>
            <person name="Ringwald M."/>
            <person name="Rost B."/>
            <person name="Ruan Y."/>
            <person name="Salzberg S.L."/>
            <person name="Sandelin A."/>
            <person name="Schneider C."/>
            <person name="Schoenbach C."/>
            <person name="Sekiguchi K."/>
            <person name="Semple C.A."/>
            <person name="Seno S."/>
            <person name="Sessa L."/>
            <person name="Sheng Y."/>
            <person name="Shibata Y."/>
            <person name="Shimada H."/>
            <person name="Shimada K."/>
            <person name="Silva D."/>
            <person name="Sinclair B."/>
            <person name="Sperling S."/>
            <person name="Stupka E."/>
            <person name="Sugiura K."/>
            <person name="Sultana R."/>
            <person name="Takenaka Y."/>
            <person name="Taki K."/>
            <person name="Tammoja K."/>
            <person name="Tan S.L."/>
            <person name="Tang S."/>
            <person name="Taylor M.S."/>
            <person name="Tegner J."/>
            <person name="Teichmann S.A."/>
            <person name="Ueda H.R."/>
            <person name="van Nimwegen E."/>
            <person name="Verardo R."/>
            <person name="Wei C.L."/>
            <person name="Yagi K."/>
            <person name="Yamanishi H."/>
            <person name="Zabarovsky E."/>
            <person name="Zhu S."/>
            <person name="Zimmer A."/>
            <person name="Hide W."/>
            <person name="Bult C."/>
            <person name="Grimmond S.M."/>
            <person name="Teasdale R.D."/>
            <person name="Liu E.T."/>
            <person name="Brusic V."/>
            <person name="Quackenbush J."/>
            <person name="Wahlestedt C."/>
            <person name="Mattick J.S."/>
            <person name="Hume D.A."/>
            <person name="Kai C."/>
            <person name="Sasaki D."/>
            <person name="Tomaru Y."/>
            <person name="Fukuda S."/>
            <person name="Kanamori-Katayama M."/>
            <person name="Suzuki M."/>
            <person name="Aoki J."/>
            <person name="Arakawa T."/>
            <person name="Iida J."/>
            <person name="Imamura K."/>
            <person name="Itoh M."/>
            <person name="Kato T."/>
            <person name="Kawaji H."/>
            <person name="Kawagashira N."/>
            <person name="Kawashima T."/>
            <person name="Kojima M."/>
            <person name="Kondo S."/>
            <person name="Konno H."/>
            <person name="Nakano K."/>
            <person name="Ninomiya N."/>
            <person name="Nishio T."/>
            <person name="Okada M."/>
            <person name="Plessy C."/>
            <person name="Shibata K."/>
            <person name="Shiraki T."/>
            <person name="Suzuki S."/>
            <person name="Tagami M."/>
            <person name="Waki K."/>
            <person name="Watahiki A."/>
            <person name="Okamura-Oho Y."/>
            <person name="Suzuki H."/>
            <person name="Kawai J."/>
            <person name="Hayashizaki Y."/>
        </authorList>
    </citation>
    <scope>NUCLEOTIDE SEQUENCE [LARGE SCALE MRNA] (ISOFORM 2)</scope>
    <scope>NUCLEOTIDE SEQUENCE [LARGE SCALE MRNA] OF 22-355 (ISOFORM 1)</scope>
    <source>
        <strain evidence="7">C57BL/6J</strain>
        <strain evidence="10">NOD</strain>
        <tissue evidence="8">Embryo</tissue>
        <tissue evidence="7">Embryonic stem cell</tissue>
        <tissue evidence="10">Thymus</tissue>
    </source>
</reference>
<reference evidence="9" key="3">
    <citation type="submission" date="2005-02" db="EMBL/GenBank/DDBJ databases">
        <title>Prediction of the coding sequences of mouse homologues of KIAA gene. The complete nucleotide sequences of mouse KIAA-homologous cDNAs identified by screening of terminal sequences of cDNA clones randomly sampled from size-fractionated libraries.</title>
        <authorList>
            <person name="Okazaki N."/>
            <person name="Kikuno R.F."/>
            <person name="Ohara R."/>
            <person name="Inamoto S."/>
            <person name="Nagase T."/>
            <person name="Ohara O."/>
            <person name="Koga H."/>
        </authorList>
    </citation>
    <scope>NUCLEOTIDE SEQUENCE [LARGE SCALE MRNA] OF 25-355</scope>
    <source>
        <tissue evidence="9">Fetal brain</tissue>
    </source>
</reference>
<reference evidence="6" key="4">
    <citation type="journal article" date="2007" name="Nat. Med.">
        <title>Nucleotide-sugar transporter SLC35D1 is critical to chondroitin sulfate synthesis in cartilage and skeletal development in mouse and human.</title>
        <authorList>
            <person name="Hiraoka S."/>
            <person name="Furuichi T."/>
            <person name="Nishimura G."/>
            <person name="Shibata S."/>
            <person name="Yanagishita M."/>
            <person name="Rimoin D.L."/>
            <person name="Superti-Furga A."/>
            <person name="Nikkels P.G."/>
            <person name="Ogawa M."/>
            <person name="Katsuyama K."/>
            <person name="Toyoda H."/>
            <person name="Kinoshita-Toyoda A."/>
            <person name="Ishida N."/>
            <person name="Isono K."/>
            <person name="Sanai Y."/>
            <person name="Cohn D.H."/>
            <person name="Koseki H."/>
            <person name="Ikegawa S."/>
        </authorList>
    </citation>
    <scope>FUNCTION</scope>
    <scope>SUBCELLULAR LOCATION</scope>
    <scope>DISRUPTION PHENOTYPE</scope>
</reference>
<gene>
    <name evidence="5 11" type="primary">Slc35d1</name>
</gene>
<protein>
    <recommendedName>
        <fullName evidence="5">Nucleotide sugar transporter SLC35D1</fullName>
    </recommendedName>
    <alternativeName>
        <fullName evidence="5">Solute carrier family 35 member D1</fullName>
    </alternativeName>
    <alternativeName>
        <fullName>UDP-galactose transporter-related protein 7</fullName>
        <shortName>UGTrel7</shortName>
    </alternativeName>
    <alternativeName>
        <fullName>UDP-glucuronic acid/UDP-N-acetylgalactosamine transporter</fullName>
        <shortName evidence="6">UDP-GlcA/UDP-GalNAc transporter</shortName>
    </alternativeName>
</protein>
<comment type="function">
    <text evidence="1 4">Antiporter that transports nucleotide sugars across the endoplasmic reticulum (ER) membrane in exchange for either their cognate nucleoside monophosphate or another nucleotide sugar (By similarity). Transports various UDP-sugars including UDP-N-acetyl-alpha-D-glucosamine (UDP-GlcNAc), UDP-N-acetyl-alpha-D-galactosamine (UDP-GalNAc) and UDP-alpha-D-glucuronate (UDP-GlcA), which are used by ER glucosyltransferases as sugar donors for the synthesis of sugar chains of glycoproteins, glycolipids and oligosaccharides (By similarity). May couple UDP-GlcNAc or UDP-GalNAc efflux to UDP-GlcA influx into the ER lumen that in turn stimulates glucuronidation and subsequent excretion of endobiotics and xenobiotics (By similarity). Plays a role in chondroitin sulfate biosynthesis, which is important for formation of cartilage extracellular matrix and normal skeletal development.</text>
</comment>
<comment type="catalytic activity">
    <reaction evidence="1">
        <text>UDP-N-acetyl-alpha-D-glucosamine(in) + UDP-alpha-D-glucuronate(out) = UDP-N-acetyl-alpha-D-glucosamine(out) + UDP-alpha-D-glucuronate(in)</text>
        <dbReference type="Rhea" id="RHEA:73703"/>
        <dbReference type="ChEBI" id="CHEBI:57705"/>
        <dbReference type="ChEBI" id="CHEBI:58052"/>
    </reaction>
    <physiologicalReaction direction="left-to-right" evidence="1">
        <dbReference type="Rhea" id="RHEA:73704"/>
    </physiologicalReaction>
</comment>
<comment type="catalytic activity">
    <reaction evidence="1">
        <text>UDP-N-acetyl-alpha-D-galactosamine(in) + UDP-alpha-D-glucuronate(out) = UDP-N-acetyl-alpha-D-galactosamine(out) + UDP-alpha-D-glucuronate(in)</text>
        <dbReference type="Rhea" id="RHEA:74835"/>
        <dbReference type="ChEBI" id="CHEBI:58052"/>
        <dbReference type="ChEBI" id="CHEBI:67138"/>
    </reaction>
    <physiologicalReaction direction="left-to-right" evidence="1">
        <dbReference type="Rhea" id="RHEA:74836"/>
    </physiologicalReaction>
</comment>
<comment type="catalytic activity">
    <reaction evidence="1">
        <text>UMP(out) + UDP-N-acetyl-alpha-D-glucosamine(in) = UMP(in) + UDP-N-acetyl-alpha-D-glucosamine(out)</text>
        <dbReference type="Rhea" id="RHEA:72695"/>
        <dbReference type="ChEBI" id="CHEBI:57705"/>
        <dbReference type="ChEBI" id="CHEBI:57865"/>
    </reaction>
</comment>
<comment type="catalytic activity">
    <reaction evidence="1">
        <text>UDP-N-acetyl-alpha-D-galactosamine(in) + UMP(out) = UDP-N-acetyl-alpha-D-galactosamine(out) + UMP(in)</text>
        <dbReference type="Rhea" id="RHEA:72735"/>
        <dbReference type="ChEBI" id="CHEBI:57865"/>
        <dbReference type="ChEBI" id="CHEBI:67138"/>
    </reaction>
</comment>
<comment type="catalytic activity">
    <reaction evidence="1">
        <text>UMP(out) + UDP-alpha-D-glucuronate(in) = UMP(in) + UDP-alpha-D-glucuronate(out)</text>
        <dbReference type="Rhea" id="RHEA:72727"/>
        <dbReference type="ChEBI" id="CHEBI:57865"/>
        <dbReference type="ChEBI" id="CHEBI:58052"/>
    </reaction>
</comment>
<comment type="catalytic activity">
    <reaction evidence="1">
        <text>UMP(out) + UDP-alpha-D-galactose(in) = UMP(in) + UDP-alpha-D-galactose(out)</text>
        <dbReference type="Rhea" id="RHEA:72703"/>
        <dbReference type="ChEBI" id="CHEBI:57865"/>
        <dbReference type="ChEBI" id="CHEBI:66914"/>
    </reaction>
</comment>
<comment type="catalytic activity">
    <reaction evidence="1">
        <text>UMP(out) + UDP-alpha-D-glucose(in) = UMP(in) + UDP-alpha-D-glucose(out)</text>
        <dbReference type="Rhea" id="RHEA:72731"/>
        <dbReference type="ChEBI" id="CHEBI:57865"/>
        <dbReference type="ChEBI" id="CHEBI:58885"/>
    </reaction>
</comment>
<comment type="catalytic activity">
    <reaction evidence="1">
        <text>UDP-alpha-D-xylose(in) + UMP(out) = UDP-alpha-D-xylose(out) + UMP(in)</text>
        <dbReference type="Rhea" id="RHEA:72723"/>
        <dbReference type="ChEBI" id="CHEBI:57632"/>
        <dbReference type="ChEBI" id="CHEBI:57865"/>
    </reaction>
</comment>
<comment type="catalytic activity">
    <reaction evidence="1">
        <text>UDP-beta-L-arabinopyranose(in) + UMP(out) = UDP-beta-L-arabinopyranose(out) + UMP(in)</text>
        <dbReference type="Rhea" id="RHEA:74671"/>
        <dbReference type="ChEBI" id="CHEBI:57865"/>
        <dbReference type="ChEBI" id="CHEBI:61457"/>
    </reaction>
</comment>
<comment type="catalytic activity">
    <reaction evidence="1">
        <text>UDP-beta-L-arabinofuranose(in) + UMP(out) = UDP-beta-L-arabinofuranose(out) + UMP(in)</text>
        <dbReference type="Rhea" id="RHEA:74679"/>
        <dbReference type="ChEBI" id="CHEBI:57865"/>
        <dbReference type="ChEBI" id="CHEBI:61463"/>
    </reaction>
</comment>
<comment type="subcellular location">
    <subcellularLocation>
        <location evidence="4">Endoplasmic reticulum membrane</location>
        <topology evidence="2">Multi-pass membrane protein</topology>
    </subcellularLocation>
</comment>
<comment type="alternative products">
    <event type="alternative splicing"/>
    <isoform>
        <id>A2AKQ0-1</id>
        <name>1</name>
        <sequence type="displayed"/>
    </isoform>
    <isoform>
        <id>A2AKQ0-2</id>
        <name>2</name>
        <sequence type="described" ref="VSP_059020"/>
    </isoform>
</comment>
<comment type="disruption phenotype">
    <text evidence="4">Neonatal lethality. Skeletal development is severely impaired leading to reduced snout and body length, and extremely short limbs. The proliferating zone of epiphyseal cartilage is disorganized with densely packed round chondrocytes and little extracellular matrix, in contrast to the regular columnar organization of chondrocytes in wild type cartilage. Chondroitin sulfate content of cartilage is significantly reduced, associated with reduced proteoglycan aggregates in the extracellular matrix.</text>
</comment>
<comment type="similarity">
    <text evidence="6">Belongs to the TPT transporter family. SLC35D subfamily.</text>
</comment>
<comment type="caution">
    <text evidence="6">It is uncertain whether Met-1 or Met-31 is the initiator.</text>
</comment>
<name>S35D1_MOUSE</name>
<keyword id="KW-0025">Alternative splicing</keyword>
<keyword id="KW-0256">Endoplasmic reticulum</keyword>
<keyword id="KW-0472">Membrane</keyword>
<keyword id="KW-1185">Reference proteome</keyword>
<keyword id="KW-0762">Sugar transport</keyword>
<keyword id="KW-0812">Transmembrane</keyword>
<keyword id="KW-1133">Transmembrane helix</keyword>
<keyword id="KW-0813">Transport</keyword>
<sequence length="355" mass="39272">MAEVHRRQHAPVKGEAPAKSSTHRDEEELGMAPAETLTVFLKLLAAGFYGVSSFLIVVVNKSVLTNYRFPSSLCVGLGQMVATVAVLWVGKTLRVVKFPDFDRNVPRKTFPLPLLYFGNQITGLFSTKKLNLPMFTVLRRFSILFTMFAEGALLKKTFSWGIKMTVFAMIIGAFVAASSDLAFDLEGYVFILINDVLTAANGAYVKQKLDSKELGKYGLLYYNALFMILPTLAIAYFTGDAQKAMEFEGWADTLFLLQFTLSCVMGFILMYATVLCTQYNSALTTTIVGCIKNILITYIGMVFGGDYIFTWTNFIGLNISIAGSLVYSYITFTEEQLSKQSEASNKLDTKGKGAV</sequence>
<accession>A2AKQ0</accession>
<accession>Q3TE90</accession>
<accession>Q5DU40</accession>
<accession>Q8BKX2</accession>
<accession>Q8BX24</accession>
<dbReference type="EMBL" id="AL772338">
    <property type="status" value="NOT_ANNOTATED_CDS"/>
    <property type="molecule type" value="Genomic_DNA"/>
</dbReference>
<dbReference type="EMBL" id="AK049180">
    <property type="protein sequence ID" value="BAC33591.1"/>
    <property type="molecule type" value="mRNA"/>
</dbReference>
<dbReference type="EMBL" id="AK049462">
    <property type="protein sequence ID" value="BAC33758.1"/>
    <property type="molecule type" value="mRNA"/>
</dbReference>
<dbReference type="EMBL" id="AK169775">
    <property type="protein sequence ID" value="BAE41358.1"/>
    <property type="molecule type" value="mRNA"/>
</dbReference>
<dbReference type="EMBL" id="AK220330">
    <property type="protein sequence ID" value="BAD90239.1"/>
    <property type="molecule type" value="mRNA"/>
</dbReference>
<dbReference type="CCDS" id="CCDS18409.1">
    <molecule id="A2AKQ0-2"/>
</dbReference>
<dbReference type="RefSeq" id="NP_001343205.1">
    <molecule id="A2AKQ0-1"/>
    <property type="nucleotide sequence ID" value="NM_001356276.1"/>
</dbReference>
<dbReference type="RefSeq" id="NP_808400.1">
    <molecule id="A2AKQ0-2"/>
    <property type="nucleotide sequence ID" value="NM_177732.5"/>
</dbReference>
<dbReference type="RefSeq" id="XP_006503143.1">
    <property type="nucleotide sequence ID" value="XM_006503080.3"/>
</dbReference>
<dbReference type="SMR" id="A2AKQ0"/>
<dbReference type="FunCoup" id="A2AKQ0">
    <property type="interactions" value="1215"/>
</dbReference>
<dbReference type="STRING" id="10090.ENSMUSP00000122124"/>
<dbReference type="iPTMnet" id="A2AKQ0"/>
<dbReference type="PhosphoSitePlus" id="A2AKQ0"/>
<dbReference type="jPOST" id="A2AKQ0"/>
<dbReference type="PeptideAtlas" id="A2AKQ0"/>
<dbReference type="ProteomicsDB" id="256886">
    <molecule id="A2AKQ0-1"/>
</dbReference>
<dbReference type="ProteomicsDB" id="256887">
    <molecule id="A2AKQ0-2"/>
</dbReference>
<dbReference type="Antibodypedia" id="33400">
    <property type="antibodies" value="109 antibodies from 20 providers"/>
</dbReference>
<dbReference type="DNASU" id="242585"/>
<dbReference type="Ensembl" id="ENSMUST00000150285.8">
    <molecule id="A2AKQ0-2"/>
    <property type="protein sequence ID" value="ENSMUSP00000122124.2"/>
    <property type="gene ID" value="ENSMUSG00000028521.18"/>
</dbReference>
<dbReference type="GeneID" id="242585"/>
<dbReference type="KEGG" id="mmu:242585"/>
<dbReference type="UCSC" id="uc008txk.1">
    <property type="organism name" value="mouse"/>
</dbReference>
<dbReference type="UCSC" id="uc008txl.1">
    <molecule id="A2AKQ0-1"/>
    <property type="organism name" value="mouse"/>
</dbReference>
<dbReference type="AGR" id="MGI:2140361"/>
<dbReference type="CTD" id="23169"/>
<dbReference type="MGI" id="MGI:2140361">
    <property type="gene designation" value="Slc35d1"/>
</dbReference>
<dbReference type="VEuPathDB" id="HostDB:ENSMUSG00000028521"/>
<dbReference type="GeneTree" id="ENSGT00940000155665"/>
<dbReference type="HOGENOM" id="CLU_040726_1_0_1"/>
<dbReference type="InParanoid" id="A2AKQ0"/>
<dbReference type="OMA" id="YAYCKLQ"/>
<dbReference type="PhylomeDB" id="A2AKQ0"/>
<dbReference type="TreeFam" id="TF313307"/>
<dbReference type="Reactome" id="R-MMU-173599">
    <property type="pathway name" value="Formation of the active cofactor, UDP-glucuronate"/>
</dbReference>
<dbReference type="Reactome" id="R-MMU-727802">
    <property type="pathway name" value="Transport of nucleotide sugars"/>
</dbReference>
<dbReference type="BioGRID-ORCS" id="242585">
    <property type="hits" value="4 hits in 46 CRISPR screens"/>
</dbReference>
<dbReference type="ChiTaRS" id="Slc35d1">
    <property type="organism name" value="mouse"/>
</dbReference>
<dbReference type="PRO" id="PR:A2AKQ0"/>
<dbReference type="Proteomes" id="UP000000589">
    <property type="component" value="Chromosome 4"/>
</dbReference>
<dbReference type="RNAct" id="A2AKQ0">
    <property type="molecule type" value="protein"/>
</dbReference>
<dbReference type="Bgee" id="ENSMUSG00000028521">
    <property type="expression patterns" value="Expressed in left lobe of liver and 215 other cell types or tissues"/>
</dbReference>
<dbReference type="ExpressionAtlas" id="A2AKQ0">
    <property type="expression patterns" value="baseline and differential"/>
</dbReference>
<dbReference type="GO" id="GO:0005783">
    <property type="term" value="C:endoplasmic reticulum"/>
    <property type="evidence" value="ECO:0000314"/>
    <property type="project" value="MGI"/>
</dbReference>
<dbReference type="GO" id="GO:0005789">
    <property type="term" value="C:endoplasmic reticulum membrane"/>
    <property type="evidence" value="ECO:0007669"/>
    <property type="project" value="UniProtKB-SubCell"/>
</dbReference>
<dbReference type="GO" id="GO:0015297">
    <property type="term" value="F:antiporter activity"/>
    <property type="evidence" value="ECO:0007669"/>
    <property type="project" value="Ensembl"/>
</dbReference>
<dbReference type="GO" id="GO:0015165">
    <property type="term" value="F:pyrimidine nucleotide-sugar transmembrane transporter activity"/>
    <property type="evidence" value="ECO:0000314"/>
    <property type="project" value="MGI"/>
</dbReference>
<dbReference type="GO" id="GO:0005461">
    <property type="term" value="F:UDP-glucuronate transmembrane transporter activity"/>
    <property type="evidence" value="ECO:0000266"/>
    <property type="project" value="MGI"/>
</dbReference>
<dbReference type="GO" id="GO:0050650">
    <property type="term" value="P:chondroitin sulfate proteoglycan biosynthetic process"/>
    <property type="evidence" value="ECO:0000315"/>
    <property type="project" value="MGI"/>
</dbReference>
<dbReference type="GO" id="GO:0048706">
    <property type="term" value="P:embryonic skeletal system development"/>
    <property type="evidence" value="ECO:0000315"/>
    <property type="project" value="MGI"/>
</dbReference>
<dbReference type="GO" id="GO:0090481">
    <property type="term" value="P:pyrimidine nucleotide-sugar transmembrane transport"/>
    <property type="evidence" value="ECO:0000314"/>
    <property type="project" value="MGI"/>
</dbReference>
<dbReference type="InterPro" id="IPR004853">
    <property type="entry name" value="Sugar_P_trans_dom"/>
</dbReference>
<dbReference type="InterPro" id="IPR050186">
    <property type="entry name" value="TPT_transporter"/>
</dbReference>
<dbReference type="PANTHER" id="PTHR11132">
    <property type="entry name" value="SOLUTE CARRIER FAMILY 35"/>
    <property type="match status" value="1"/>
</dbReference>
<dbReference type="Pfam" id="PF03151">
    <property type="entry name" value="TPT"/>
    <property type="match status" value="1"/>
</dbReference>
<evidence type="ECO:0000250" key="1">
    <source>
        <dbReference type="UniProtKB" id="Q9NTN3"/>
    </source>
</evidence>
<evidence type="ECO:0000255" key="2"/>
<evidence type="ECO:0000256" key="3">
    <source>
        <dbReference type="SAM" id="MobiDB-lite"/>
    </source>
</evidence>
<evidence type="ECO:0000269" key="4">
    <source>
    </source>
</evidence>
<evidence type="ECO:0000303" key="5">
    <source>
    </source>
</evidence>
<evidence type="ECO:0000305" key="6"/>
<evidence type="ECO:0000312" key="7">
    <source>
        <dbReference type="EMBL" id="BAC33591.1"/>
    </source>
</evidence>
<evidence type="ECO:0000312" key="8">
    <source>
        <dbReference type="EMBL" id="BAC33758.1"/>
    </source>
</evidence>
<evidence type="ECO:0000312" key="9">
    <source>
        <dbReference type="EMBL" id="BAD90239.1"/>
    </source>
</evidence>
<evidence type="ECO:0000312" key="10">
    <source>
        <dbReference type="EMBL" id="BAE41358.1"/>
    </source>
</evidence>
<evidence type="ECO:0000312" key="11">
    <source>
        <dbReference type="MGI" id="MGI:2140361"/>
    </source>
</evidence>
<evidence type="ECO:0000312" key="12">
    <source>
        <dbReference type="Proteomes" id="UP000000589"/>
    </source>
</evidence>
<feature type="chain" id="PRO_0000440990" description="Nucleotide sugar transporter SLC35D1">
    <location>
        <begin position="1"/>
        <end position="355"/>
    </location>
</feature>
<feature type="transmembrane region" description="Helical" evidence="2">
    <location>
        <begin position="39"/>
        <end position="59"/>
    </location>
</feature>
<feature type="transmembrane region" description="Helical" evidence="2">
    <location>
        <begin position="69"/>
        <end position="89"/>
    </location>
</feature>
<feature type="transmembrane region" description="Helical" evidence="2">
    <location>
        <begin position="157"/>
        <end position="177"/>
    </location>
</feature>
<feature type="transmembrane region" description="Helical" evidence="2">
    <location>
        <begin position="185"/>
        <end position="205"/>
    </location>
</feature>
<feature type="transmembrane region" description="Helical" evidence="2">
    <location>
        <begin position="217"/>
        <end position="237"/>
    </location>
</feature>
<feature type="transmembrane region" description="Helical" evidence="2">
    <location>
        <begin position="254"/>
        <end position="274"/>
    </location>
</feature>
<feature type="transmembrane region" description="Helical" evidence="2">
    <location>
        <begin position="281"/>
        <end position="303"/>
    </location>
</feature>
<feature type="transmembrane region" description="Helical" evidence="2">
    <location>
        <begin position="315"/>
        <end position="335"/>
    </location>
</feature>
<feature type="region of interest" description="Disordered" evidence="3">
    <location>
        <begin position="1"/>
        <end position="27"/>
    </location>
</feature>
<feature type="compositionally biased region" description="Basic residues" evidence="3">
    <location>
        <begin position="1"/>
        <end position="10"/>
    </location>
</feature>
<feature type="splice variant" id="VSP_059020" description="In isoform 2." evidence="6">
    <location>
        <begin position="244"/>
        <end position="292"/>
    </location>
</feature>
<feature type="sequence conflict" description="In Ref. 2; BAC33758." evidence="6" ref="2">
    <original>Y</original>
    <variation>N</variation>
    <location>
        <position position="116"/>
    </location>
</feature>